<comment type="function">
    <text evidence="1">Excises uracil residues from the DNA which can arise as a result of misincorporation of dUMP residues by DNA polymerase or due to deamination of cytosine.</text>
</comment>
<comment type="catalytic activity">
    <reaction>
        <text>Hydrolyzes single-stranded DNA or mismatched double-stranded DNA and polynucleotides, releasing free uracil.</text>
        <dbReference type="EC" id="3.2.2.27"/>
    </reaction>
</comment>
<comment type="subcellular location">
    <subcellularLocation>
        <location evidence="1">Cytoplasm</location>
    </subcellularLocation>
</comment>
<comment type="similarity">
    <text evidence="2">Belongs to the uracil-DNA glycosylase (UDG) superfamily. UNG family.</text>
</comment>
<dbReference type="EC" id="3.2.2.27"/>
<dbReference type="EMBL" id="BA000030">
    <property type="protein sequence ID" value="BAC69237.1"/>
    <property type="molecule type" value="Genomic_DNA"/>
</dbReference>
<dbReference type="RefSeq" id="WP_010982965.1">
    <property type="nucleotide sequence ID" value="NZ_JZJK01000086.1"/>
</dbReference>
<dbReference type="SMR" id="Q82MX6"/>
<dbReference type="GeneID" id="41538624"/>
<dbReference type="KEGG" id="sma:SAVERM_1527"/>
<dbReference type="eggNOG" id="COG0692">
    <property type="taxonomic scope" value="Bacteria"/>
</dbReference>
<dbReference type="HOGENOM" id="CLU_032162_3_1_11"/>
<dbReference type="OrthoDB" id="9804372at2"/>
<dbReference type="Proteomes" id="UP000000428">
    <property type="component" value="Chromosome"/>
</dbReference>
<dbReference type="GO" id="GO:0005737">
    <property type="term" value="C:cytoplasm"/>
    <property type="evidence" value="ECO:0007669"/>
    <property type="project" value="UniProtKB-SubCell"/>
</dbReference>
<dbReference type="GO" id="GO:0004844">
    <property type="term" value="F:uracil DNA N-glycosylase activity"/>
    <property type="evidence" value="ECO:0007669"/>
    <property type="project" value="UniProtKB-UniRule"/>
</dbReference>
<dbReference type="GO" id="GO:0097510">
    <property type="term" value="P:base-excision repair, AP site formation via deaminated base removal"/>
    <property type="evidence" value="ECO:0007669"/>
    <property type="project" value="TreeGrafter"/>
</dbReference>
<dbReference type="CDD" id="cd10027">
    <property type="entry name" value="UDG-F1-like"/>
    <property type="match status" value="1"/>
</dbReference>
<dbReference type="FunFam" id="3.40.470.10:FF:000006">
    <property type="entry name" value="Uracil-DNA glycosylase"/>
    <property type="match status" value="1"/>
</dbReference>
<dbReference type="Gene3D" id="3.40.470.10">
    <property type="entry name" value="Uracil-DNA glycosylase-like domain"/>
    <property type="match status" value="1"/>
</dbReference>
<dbReference type="HAMAP" id="MF_00148">
    <property type="entry name" value="UDG"/>
    <property type="match status" value="1"/>
</dbReference>
<dbReference type="InterPro" id="IPR002043">
    <property type="entry name" value="UDG_fam1"/>
</dbReference>
<dbReference type="InterPro" id="IPR018085">
    <property type="entry name" value="Ura-DNA_Glyclase_AS"/>
</dbReference>
<dbReference type="InterPro" id="IPR005122">
    <property type="entry name" value="Uracil-DNA_glycosylase-like"/>
</dbReference>
<dbReference type="InterPro" id="IPR036895">
    <property type="entry name" value="Uracil-DNA_glycosylase-like_sf"/>
</dbReference>
<dbReference type="NCBIfam" id="NF003588">
    <property type="entry name" value="PRK05254.1-1"/>
    <property type="match status" value="1"/>
</dbReference>
<dbReference type="NCBIfam" id="NF003592">
    <property type="entry name" value="PRK05254.1-5"/>
    <property type="match status" value="1"/>
</dbReference>
<dbReference type="PANTHER" id="PTHR11264">
    <property type="entry name" value="URACIL-DNA GLYCOSYLASE"/>
    <property type="match status" value="1"/>
</dbReference>
<dbReference type="PANTHER" id="PTHR11264:SF0">
    <property type="entry name" value="URACIL-DNA GLYCOSYLASE"/>
    <property type="match status" value="1"/>
</dbReference>
<dbReference type="Pfam" id="PF03167">
    <property type="entry name" value="UDG"/>
    <property type="match status" value="1"/>
</dbReference>
<dbReference type="SMART" id="SM00986">
    <property type="entry name" value="UDG"/>
    <property type="match status" value="1"/>
</dbReference>
<dbReference type="SMART" id="SM00987">
    <property type="entry name" value="UreE_C"/>
    <property type="match status" value="1"/>
</dbReference>
<dbReference type="SUPFAM" id="SSF52141">
    <property type="entry name" value="Uracil-DNA glycosylase-like"/>
    <property type="match status" value="1"/>
</dbReference>
<dbReference type="PROSITE" id="PS00130">
    <property type="entry name" value="U_DNA_GLYCOSYLASE"/>
    <property type="match status" value="1"/>
</dbReference>
<protein>
    <recommendedName>
        <fullName>Uracil-DNA glycosylase 1</fullName>
        <shortName>UDG 1</shortName>
        <ecNumber>3.2.2.27</ecNumber>
    </recommendedName>
</protein>
<reference key="1">
    <citation type="journal article" date="2001" name="Proc. Natl. Acad. Sci. U.S.A.">
        <title>Genome sequence of an industrial microorganism Streptomyces avermitilis: deducing the ability of producing secondary metabolites.</title>
        <authorList>
            <person name="Omura S."/>
            <person name="Ikeda H."/>
            <person name="Ishikawa J."/>
            <person name="Hanamoto A."/>
            <person name="Takahashi C."/>
            <person name="Shinose M."/>
            <person name="Takahashi Y."/>
            <person name="Horikawa H."/>
            <person name="Nakazawa H."/>
            <person name="Osonoe T."/>
            <person name="Kikuchi H."/>
            <person name="Shiba T."/>
            <person name="Sakaki Y."/>
            <person name="Hattori M."/>
        </authorList>
    </citation>
    <scope>NUCLEOTIDE SEQUENCE [LARGE SCALE GENOMIC DNA]</scope>
    <source>
        <strain>ATCC 31267 / DSM 46492 / JCM 5070 / NBRC 14893 / NCIMB 12804 / NRRL 8165 / MA-4680</strain>
    </source>
</reference>
<reference key="2">
    <citation type="journal article" date="2003" name="Nat. Biotechnol.">
        <title>Complete genome sequence and comparative analysis of the industrial microorganism Streptomyces avermitilis.</title>
        <authorList>
            <person name="Ikeda H."/>
            <person name="Ishikawa J."/>
            <person name="Hanamoto A."/>
            <person name="Shinose M."/>
            <person name="Kikuchi H."/>
            <person name="Shiba T."/>
            <person name="Sakaki Y."/>
            <person name="Hattori M."/>
            <person name="Omura S."/>
        </authorList>
    </citation>
    <scope>NUCLEOTIDE SEQUENCE [LARGE SCALE GENOMIC DNA]</scope>
    <source>
        <strain>ATCC 31267 / DSM 46492 / JCM 5070 / NBRC 14893 / NCIMB 12804 / NRRL 8165 / MA-4680</strain>
    </source>
</reference>
<evidence type="ECO:0000250" key="1"/>
<evidence type="ECO:0000305" key="2"/>
<name>UNG1_STRAW</name>
<accession>Q82MX6</accession>
<feature type="chain" id="PRO_0000176147" description="Uracil-DNA glycosylase 1">
    <location>
        <begin position="1"/>
        <end position="225"/>
    </location>
</feature>
<feature type="active site" description="Proton acceptor" evidence="1">
    <location>
        <position position="68"/>
    </location>
</feature>
<organism>
    <name type="scientific">Streptomyces avermitilis (strain ATCC 31267 / DSM 46492 / JCM 5070 / NBRC 14893 / NCIMB 12804 / NRRL 8165 / MA-4680)</name>
    <dbReference type="NCBI Taxonomy" id="227882"/>
    <lineage>
        <taxon>Bacteria</taxon>
        <taxon>Bacillati</taxon>
        <taxon>Actinomycetota</taxon>
        <taxon>Actinomycetes</taxon>
        <taxon>Kitasatosporales</taxon>
        <taxon>Streptomycetaceae</taxon>
        <taxon>Streptomyces</taxon>
    </lineage>
</organism>
<proteinExistence type="inferred from homology"/>
<keyword id="KW-0963">Cytoplasm</keyword>
<keyword id="KW-0227">DNA damage</keyword>
<keyword id="KW-0234">DNA repair</keyword>
<keyword id="KW-0378">Hydrolase</keyword>
<keyword id="KW-1185">Reference proteome</keyword>
<gene>
    <name type="primary">ung1</name>
    <name type="ordered locus">SAV_1527</name>
</gene>
<sequence length="225" mass="24410">MAPRPLHELVEAGWAKALDPVAGRIAAMGDFLRAEVAAGRTYLPAGANVLRAFQQPFDDVRVLIVGQDPYPTPGMAIGLSFAVSPEVRSLPGSLENIFRELHTDLGLPRPSNGDLTPWTEQGVLLLNRALTTAPRKPAAHRGKGWEEVTEQAIRALVARGTPLVSVLWGRDARNLRPLLGDLPAIESAHPSPMSADRGFFGSRPFSRANELLVRQGAQPVDWRLP</sequence>